<dbReference type="EMBL" id="BC114023">
    <property type="protein sequence ID" value="AAI14024.1"/>
    <property type="molecule type" value="mRNA"/>
</dbReference>
<dbReference type="RefSeq" id="NP_001039713.1">
    <property type="nucleotide sequence ID" value="NM_001046248.2"/>
</dbReference>
<dbReference type="FunCoup" id="Q29RT8">
    <property type="interactions" value="328"/>
</dbReference>
<dbReference type="STRING" id="9913.ENSBTAP00000057169"/>
<dbReference type="GlyCosmos" id="Q29RT8">
    <property type="glycosylation" value="1 site, No reported glycans"/>
</dbReference>
<dbReference type="GlyGen" id="Q29RT8">
    <property type="glycosylation" value="1 site"/>
</dbReference>
<dbReference type="PaxDb" id="9913-ENSBTAP00000043142"/>
<dbReference type="GeneID" id="520247"/>
<dbReference type="KEGG" id="bta:520247"/>
<dbReference type="CTD" id="64748"/>
<dbReference type="eggNOG" id="KOG3030">
    <property type="taxonomic scope" value="Eukaryota"/>
</dbReference>
<dbReference type="InParanoid" id="Q29RT8"/>
<dbReference type="OrthoDB" id="8907274at2759"/>
<dbReference type="Proteomes" id="UP000009136">
    <property type="component" value="Unplaced"/>
</dbReference>
<dbReference type="GO" id="GO:0005886">
    <property type="term" value="C:plasma membrane"/>
    <property type="evidence" value="ECO:0000318"/>
    <property type="project" value="GO_Central"/>
</dbReference>
<dbReference type="GO" id="GO:0008195">
    <property type="term" value="F:phosphatidate phosphatase activity"/>
    <property type="evidence" value="ECO:0000318"/>
    <property type="project" value="GO_Central"/>
</dbReference>
<dbReference type="GO" id="GO:0046839">
    <property type="term" value="P:phospholipid dephosphorylation"/>
    <property type="evidence" value="ECO:0000318"/>
    <property type="project" value="GO_Central"/>
</dbReference>
<dbReference type="GO" id="GO:0006644">
    <property type="term" value="P:phospholipid metabolic process"/>
    <property type="evidence" value="ECO:0000318"/>
    <property type="project" value="GO_Central"/>
</dbReference>
<dbReference type="GO" id="GO:0007165">
    <property type="term" value="P:signal transduction"/>
    <property type="evidence" value="ECO:0000318"/>
    <property type="project" value="GO_Central"/>
</dbReference>
<dbReference type="CDD" id="cd03384">
    <property type="entry name" value="PAP2_wunen"/>
    <property type="match status" value="1"/>
</dbReference>
<dbReference type="FunFam" id="1.20.144.10:FF:000006">
    <property type="entry name" value="Phospholipid phosphatase-related protein type 2 isoform X1"/>
    <property type="match status" value="1"/>
</dbReference>
<dbReference type="Gene3D" id="1.20.144.10">
    <property type="entry name" value="Phosphatidic acid phosphatase type 2/haloperoxidase"/>
    <property type="match status" value="1"/>
</dbReference>
<dbReference type="InterPro" id="IPR036938">
    <property type="entry name" value="P_Acid_Pase_2/haloperoxi_sf"/>
</dbReference>
<dbReference type="InterPro" id="IPR000326">
    <property type="entry name" value="P_Acid_Pase_2/haloperoxidase"/>
</dbReference>
<dbReference type="InterPro" id="IPR043216">
    <property type="entry name" value="PA_PP_rel"/>
</dbReference>
<dbReference type="PANTHER" id="PTHR10165">
    <property type="entry name" value="LIPID PHOSPHATE PHOSPHATASE"/>
    <property type="match status" value="1"/>
</dbReference>
<dbReference type="PANTHER" id="PTHR10165:SF15">
    <property type="entry name" value="PHOSPHOLIPID PHOSPHATASE-RELATED PROTEIN TYPE 2"/>
    <property type="match status" value="1"/>
</dbReference>
<dbReference type="Pfam" id="PF01569">
    <property type="entry name" value="PAP2"/>
    <property type="match status" value="1"/>
</dbReference>
<dbReference type="SMART" id="SM00014">
    <property type="entry name" value="acidPPc"/>
    <property type="match status" value="1"/>
</dbReference>
<dbReference type="SUPFAM" id="SSF48317">
    <property type="entry name" value="Acid phosphatase/Vanadium-dependent haloperoxidase"/>
    <property type="match status" value="1"/>
</dbReference>
<accession>Q29RT8</accession>
<name>PLPR2_BOVIN</name>
<proteinExistence type="evidence at transcript level"/>
<sequence>MAGGRPQLKRSFSIIPCFVFVEILLGELARAFFPAPPSAVPIIGESTIVSGACCRFSPPLRRLVRFLGVYSFGLFTTTIFANAGQVVTGNPTPHFLSVCRPNYTALGCPPPSPDRPGPDRFVNDQGACAGSPSLVAAARRAFPCKDAALCAYAVTYTAMYVTLVFRVKGSRLVKPSLCLALLCPAFLVGVVRVAEYRNHWSDVLAGFLTGAAIATFLVTCVVHNFQSRPPSGRRLSPWEDLSQAPTMDSPLEKLSVAQEPEGCRSHSTPARLTPSKPQNCARRGHLIPNCVSSRAPAMCSSPRVPRPRLRSEPTPLPLPLPLPAPAPSQGPSPSSPGPGGPGGGGSRGRKLLLPTPLLRDLYTLSGLYPSPFHRDNFSPYLFASRDHLL</sequence>
<protein>
    <recommendedName>
        <fullName evidence="3">Phospholipid phosphatase-related protein type 2</fullName>
    </recommendedName>
    <alternativeName>
        <fullName evidence="1">Inactive phospholipid phosphatase PLPPR2</fullName>
    </alternativeName>
    <alternativeName>
        <fullName evidence="6">Lipid phosphate phosphatase-related protein type 2</fullName>
    </alternativeName>
    <alternativeName>
        <fullName evidence="3">Plasticity-related gene 4 protein</fullName>
        <shortName evidence="3">PRG-4</shortName>
    </alternativeName>
</protein>
<feature type="chain" id="PRO_0000317537" description="Phospholipid phosphatase-related protein type 2">
    <location>
        <begin position="1"/>
        <end position="389"/>
    </location>
</feature>
<feature type="transmembrane region" description="Helical" evidence="4">
    <location>
        <begin position="14"/>
        <end position="34"/>
    </location>
</feature>
<feature type="transmembrane region" description="Helical" evidence="4">
    <location>
        <begin position="66"/>
        <end position="86"/>
    </location>
</feature>
<feature type="transmembrane region" description="Helical" evidence="4">
    <location>
        <begin position="147"/>
        <end position="167"/>
    </location>
</feature>
<feature type="transmembrane region" description="Helical" evidence="4">
    <location>
        <begin position="176"/>
        <end position="196"/>
    </location>
</feature>
<feature type="transmembrane region" description="Helical" evidence="4">
    <location>
        <begin position="203"/>
        <end position="223"/>
    </location>
</feature>
<feature type="region of interest" description="Disordered" evidence="5">
    <location>
        <begin position="255"/>
        <end position="280"/>
    </location>
</feature>
<feature type="region of interest" description="Disordered" evidence="5">
    <location>
        <begin position="295"/>
        <end position="351"/>
    </location>
</feature>
<feature type="compositionally biased region" description="Polar residues" evidence="5">
    <location>
        <begin position="265"/>
        <end position="278"/>
    </location>
</feature>
<feature type="compositionally biased region" description="Pro residues" evidence="5">
    <location>
        <begin position="314"/>
        <end position="339"/>
    </location>
</feature>
<feature type="modified residue" description="Phosphoserine" evidence="2">
    <location>
        <position position="236"/>
    </location>
</feature>
<feature type="modified residue" description="Phosphoserine" evidence="2">
    <location>
        <position position="249"/>
    </location>
</feature>
<feature type="glycosylation site" description="N-linked (GlcNAc...) asparagine" evidence="4">
    <location>
        <position position="102"/>
    </location>
</feature>
<gene>
    <name evidence="3" type="primary">PLPPR2</name>
    <name evidence="6" type="synonym">LPPR2</name>
    <name evidence="2" type="synonym">PRG4</name>
</gene>
<reference key="1">
    <citation type="submission" date="2006-02" db="EMBL/GenBank/DDBJ databases">
        <authorList>
            <consortium name="NIH - Mammalian Gene Collection (MGC) project"/>
        </authorList>
    </citation>
    <scope>NUCLEOTIDE SEQUENCE [LARGE SCALE MRNA]</scope>
    <source>
        <strain>Hereford</strain>
        <tissue>Testis</tissue>
    </source>
</reference>
<comment type="subcellular location">
    <subcellularLocation>
        <location evidence="4">Membrane</location>
        <topology evidence="4">Multi-pass membrane protein</topology>
    </subcellularLocation>
</comment>
<comment type="similarity">
    <text evidence="7">Belongs to the PA-phosphatase related phosphoesterase family.</text>
</comment>
<comment type="caution">
    <text evidence="1">Has most probably no phospholipid phosphatase activity (By similarity). This is supported by the fact that the phosphatase sequence motifs as well as the His residue acting as a nucleophile in active phosphatases of the PA-phosphatase related phosphoesterase family are not conserved (By similarity).</text>
</comment>
<keyword id="KW-0325">Glycoprotein</keyword>
<keyword id="KW-0472">Membrane</keyword>
<keyword id="KW-0597">Phosphoprotein</keyword>
<keyword id="KW-1185">Reference proteome</keyword>
<keyword id="KW-0812">Transmembrane</keyword>
<keyword id="KW-1133">Transmembrane helix</keyword>
<organism>
    <name type="scientific">Bos taurus</name>
    <name type="common">Bovine</name>
    <dbReference type="NCBI Taxonomy" id="9913"/>
    <lineage>
        <taxon>Eukaryota</taxon>
        <taxon>Metazoa</taxon>
        <taxon>Chordata</taxon>
        <taxon>Craniata</taxon>
        <taxon>Vertebrata</taxon>
        <taxon>Euteleostomi</taxon>
        <taxon>Mammalia</taxon>
        <taxon>Eutheria</taxon>
        <taxon>Laurasiatheria</taxon>
        <taxon>Artiodactyla</taxon>
        <taxon>Ruminantia</taxon>
        <taxon>Pecora</taxon>
        <taxon>Bovidae</taxon>
        <taxon>Bovinae</taxon>
        <taxon>Bos</taxon>
    </lineage>
</organism>
<evidence type="ECO:0000250" key="1">
    <source>
        <dbReference type="UniProtKB" id="Q6WAY2"/>
    </source>
</evidence>
<evidence type="ECO:0000250" key="2">
    <source>
        <dbReference type="UniProtKB" id="Q8VCY8"/>
    </source>
</evidence>
<evidence type="ECO:0000250" key="3">
    <source>
        <dbReference type="UniProtKB" id="Q96GM1"/>
    </source>
</evidence>
<evidence type="ECO:0000255" key="4"/>
<evidence type="ECO:0000256" key="5">
    <source>
        <dbReference type="SAM" id="MobiDB-lite"/>
    </source>
</evidence>
<evidence type="ECO:0000303" key="6">
    <source ref="1"/>
</evidence>
<evidence type="ECO:0000305" key="7"/>